<proteinExistence type="inferred from homology"/>
<accession>Q7NK60</accession>
<protein>
    <recommendedName>
        <fullName evidence="1">DNA-directed RNA polymerase subunit omega</fullName>
        <shortName evidence="1">RNAP omega subunit</shortName>
        <ecNumber evidence="1">2.7.7.6</ecNumber>
    </recommendedName>
    <alternativeName>
        <fullName evidence="1">RNA polymerase omega subunit</fullName>
    </alternativeName>
    <alternativeName>
        <fullName evidence="1">Transcriptase subunit omega</fullName>
    </alternativeName>
</protein>
<organism>
    <name type="scientific">Gloeobacter violaceus (strain ATCC 29082 / PCC 7421)</name>
    <dbReference type="NCBI Taxonomy" id="251221"/>
    <lineage>
        <taxon>Bacteria</taxon>
        <taxon>Bacillati</taxon>
        <taxon>Cyanobacteriota</taxon>
        <taxon>Cyanophyceae</taxon>
        <taxon>Gloeobacterales</taxon>
        <taxon>Gloeobacteraceae</taxon>
        <taxon>Gloeobacter</taxon>
    </lineage>
</organism>
<sequence length="73" mass="8525">MNQPVVETAELMRRVEQLVDAAANRYRITVQVANRAKRRRYEDLNDDDGNFKPVLRAIFEMSDEMNEPEIIGD</sequence>
<gene>
    <name evidence="1" type="primary">rpoZ</name>
    <name type="ordered locus">gsl1620</name>
</gene>
<dbReference type="EC" id="2.7.7.6" evidence="1"/>
<dbReference type="EMBL" id="BA000045">
    <property type="protein sequence ID" value="BAC89561.1"/>
    <property type="molecule type" value="Genomic_DNA"/>
</dbReference>
<dbReference type="RefSeq" id="NP_924566.1">
    <property type="nucleotide sequence ID" value="NC_005125.1"/>
</dbReference>
<dbReference type="RefSeq" id="WP_011141619.1">
    <property type="nucleotide sequence ID" value="NC_005125.1"/>
</dbReference>
<dbReference type="SMR" id="Q7NK60"/>
<dbReference type="STRING" id="251221.gene:10759110"/>
<dbReference type="EnsemblBacteria" id="BAC89561">
    <property type="protein sequence ID" value="BAC89561"/>
    <property type="gene ID" value="BAC89561"/>
</dbReference>
<dbReference type="KEGG" id="gvi:gsl1620"/>
<dbReference type="PATRIC" id="fig|251221.4.peg.1657"/>
<dbReference type="eggNOG" id="ENOG5032RMS">
    <property type="taxonomic scope" value="Bacteria"/>
</dbReference>
<dbReference type="HOGENOM" id="CLU_175526_0_0_3"/>
<dbReference type="InParanoid" id="Q7NK60"/>
<dbReference type="OrthoDB" id="463386at2"/>
<dbReference type="PhylomeDB" id="Q7NK60"/>
<dbReference type="Proteomes" id="UP000000557">
    <property type="component" value="Chromosome"/>
</dbReference>
<dbReference type="GO" id="GO:0000428">
    <property type="term" value="C:DNA-directed RNA polymerase complex"/>
    <property type="evidence" value="ECO:0007669"/>
    <property type="project" value="UniProtKB-KW"/>
</dbReference>
<dbReference type="GO" id="GO:0003677">
    <property type="term" value="F:DNA binding"/>
    <property type="evidence" value="ECO:0007669"/>
    <property type="project" value="UniProtKB-UniRule"/>
</dbReference>
<dbReference type="GO" id="GO:0003899">
    <property type="term" value="F:DNA-directed RNA polymerase activity"/>
    <property type="evidence" value="ECO:0007669"/>
    <property type="project" value="UniProtKB-UniRule"/>
</dbReference>
<dbReference type="GO" id="GO:0006351">
    <property type="term" value="P:DNA-templated transcription"/>
    <property type="evidence" value="ECO:0007669"/>
    <property type="project" value="UniProtKB-UniRule"/>
</dbReference>
<dbReference type="HAMAP" id="MF_00366">
    <property type="entry name" value="RNApol_bact_RpoZ"/>
    <property type="match status" value="1"/>
</dbReference>
<dbReference type="InterPro" id="IPR003716">
    <property type="entry name" value="DNA-dir_RNA_pol_omega"/>
</dbReference>
<dbReference type="InterPro" id="IPR006110">
    <property type="entry name" value="Pol_omega/Rpo6/RPB6"/>
</dbReference>
<dbReference type="InterPro" id="IPR036161">
    <property type="entry name" value="RPB6/omega-like_sf"/>
</dbReference>
<dbReference type="NCBIfam" id="NF001574">
    <property type="entry name" value="PRK00392.2-5"/>
    <property type="match status" value="1"/>
</dbReference>
<dbReference type="Pfam" id="PF01192">
    <property type="entry name" value="RNA_pol_Rpb6"/>
    <property type="match status" value="1"/>
</dbReference>
<dbReference type="SUPFAM" id="SSF63562">
    <property type="entry name" value="RPB6/omega subunit-like"/>
    <property type="match status" value="1"/>
</dbReference>
<evidence type="ECO:0000255" key="1">
    <source>
        <dbReference type="HAMAP-Rule" id="MF_00366"/>
    </source>
</evidence>
<comment type="function">
    <text evidence="1">Promotes RNA polymerase assembly. Latches the N- and C-terminal regions of the beta' subunit thereby facilitating its interaction with the beta and alpha subunits.</text>
</comment>
<comment type="catalytic activity">
    <reaction evidence="1">
        <text>RNA(n) + a ribonucleoside 5'-triphosphate = RNA(n+1) + diphosphate</text>
        <dbReference type="Rhea" id="RHEA:21248"/>
        <dbReference type="Rhea" id="RHEA-COMP:14527"/>
        <dbReference type="Rhea" id="RHEA-COMP:17342"/>
        <dbReference type="ChEBI" id="CHEBI:33019"/>
        <dbReference type="ChEBI" id="CHEBI:61557"/>
        <dbReference type="ChEBI" id="CHEBI:140395"/>
        <dbReference type="EC" id="2.7.7.6"/>
    </reaction>
</comment>
<comment type="subunit">
    <text evidence="1">In cyanobacteria the RNAP catalytic core is composed of 2 alpha, 1 beta, 1 beta', 1 gamma and 1 omega subunit. When a sigma factor is associated with the core the holoenzyme is formed, which can initiate transcription.</text>
</comment>
<comment type="similarity">
    <text evidence="1">Belongs to the RNA polymerase subunit omega family.</text>
</comment>
<reference key="1">
    <citation type="journal article" date="2003" name="DNA Res.">
        <title>Complete genome structure of Gloeobacter violaceus PCC 7421, a cyanobacterium that lacks thylakoids.</title>
        <authorList>
            <person name="Nakamura Y."/>
            <person name="Kaneko T."/>
            <person name="Sato S."/>
            <person name="Mimuro M."/>
            <person name="Miyashita H."/>
            <person name="Tsuchiya T."/>
            <person name="Sasamoto S."/>
            <person name="Watanabe A."/>
            <person name="Kawashima K."/>
            <person name="Kishida Y."/>
            <person name="Kiyokawa C."/>
            <person name="Kohara M."/>
            <person name="Matsumoto M."/>
            <person name="Matsuno A."/>
            <person name="Nakazaki N."/>
            <person name="Shimpo S."/>
            <person name="Takeuchi C."/>
            <person name="Yamada M."/>
            <person name="Tabata S."/>
        </authorList>
    </citation>
    <scope>NUCLEOTIDE SEQUENCE [LARGE SCALE GENOMIC DNA]</scope>
    <source>
        <strain>ATCC 29082 / PCC 7421</strain>
    </source>
</reference>
<keyword id="KW-0240">DNA-directed RNA polymerase</keyword>
<keyword id="KW-0548">Nucleotidyltransferase</keyword>
<keyword id="KW-1185">Reference proteome</keyword>
<keyword id="KW-0804">Transcription</keyword>
<keyword id="KW-0808">Transferase</keyword>
<name>RPOZ_GLOVI</name>
<feature type="chain" id="PRO_0000128939" description="DNA-directed RNA polymerase subunit omega">
    <location>
        <begin position="1"/>
        <end position="73"/>
    </location>
</feature>